<reference key="1">
    <citation type="journal article" date="1990" name="Plant Mol. Biol.">
        <title>Glycine-rich RNA-binding proteins from Sorghum vulgare.</title>
        <authorList>
            <person name="Cretin C."/>
            <person name="Puigdomenech P."/>
        </authorList>
    </citation>
    <scope>NUCLEOTIDE SEQUENCE [MRNA]</scope>
    <source>
        <strain>cv. Tamaran FNK 140</strain>
        <tissue>Leaf</tissue>
    </source>
</reference>
<proteinExistence type="evidence at transcript level"/>
<feature type="chain" id="PRO_0000081606" description="Glycine-rich RNA-binding protein 2">
    <location>
        <begin position="1"/>
        <end position="168"/>
    </location>
</feature>
<feature type="domain" description="RRM" evidence="1">
    <location>
        <begin position="8"/>
        <end position="86"/>
    </location>
</feature>
<feature type="region of interest" description="Disordered" evidence="2">
    <location>
        <begin position="148"/>
        <end position="168"/>
    </location>
</feature>
<comment type="function">
    <text>Possibly has a role in RNA transcription or processing during stress.</text>
</comment>
<sequence>MAAADVEYRCFVGGLAWATNNETLEQAFANFGQVIDSKVITDRETGRSRGFGFVTFSSEQSMLDAIENMNGKELDGRNITVNQAQSRGGGGGGGGYGGGGGGYGGREGGGYGGGGGGYGGRREGGGGYGGGGYGGGGGGYGGREGGGGYGGGGGYGGNRGDSGGNWRN</sequence>
<evidence type="ECO:0000255" key="1">
    <source>
        <dbReference type="PROSITE-ProRule" id="PRU00176"/>
    </source>
</evidence>
<evidence type="ECO:0000256" key="2">
    <source>
        <dbReference type="SAM" id="MobiDB-lite"/>
    </source>
</evidence>
<protein>
    <recommendedName>
        <fullName>Glycine-rich RNA-binding protein 2</fullName>
    </recommendedName>
</protein>
<organism>
    <name type="scientific">Sorghum bicolor</name>
    <name type="common">Sorghum</name>
    <name type="synonym">Sorghum vulgare</name>
    <dbReference type="NCBI Taxonomy" id="4558"/>
    <lineage>
        <taxon>Eukaryota</taxon>
        <taxon>Viridiplantae</taxon>
        <taxon>Streptophyta</taxon>
        <taxon>Embryophyta</taxon>
        <taxon>Tracheophyta</taxon>
        <taxon>Spermatophyta</taxon>
        <taxon>Magnoliopsida</taxon>
        <taxon>Liliopsida</taxon>
        <taxon>Poales</taxon>
        <taxon>Poaceae</taxon>
        <taxon>PACMAD clade</taxon>
        <taxon>Panicoideae</taxon>
        <taxon>Andropogonodae</taxon>
        <taxon>Andropogoneae</taxon>
        <taxon>Sorghinae</taxon>
        <taxon>Sorghum</taxon>
    </lineage>
</organism>
<keyword id="KW-0694">RNA-binding</keyword>
<accession>Q99070</accession>
<name>GRP2_SORBI</name>
<gene>
    <name type="primary">GRP2</name>
</gene>
<dbReference type="EMBL" id="X57662">
    <property type="protein sequence ID" value="CAA40862.1"/>
    <property type="molecule type" value="mRNA"/>
</dbReference>
<dbReference type="PIR" id="S12312">
    <property type="entry name" value="S12312"/>
</dbReference>
<dbReference type="SMR" id="Q99070"/>
<dbReference type="eggNOG" id="KOG0118">
    <property type="taxonomic scope" value="Eukaryota"/>
</dbReference>
<dbReference type="ExpressionAtlas" id="Q99070">
    <property type="expression patterns" value="baseline and differential"/>
</dbReference>
<dbReference type="GO" id="GO:0003723">
    <property type="term" value="F:RNA binding"/>
    <property type="evidence" value="ECO:0007669"/>
    <property type="project" value="UniProtKB-KW"/>
</dbReference>
<dbReference type="CDD" id="cd21608">
    <property type="entry name" value="RRM2_NsCP33_like"/>
    <property type="match status" value="1"/>
</dbReference>
<dbReference type="Gene3D" id="3.30.70.330">
    <property type="match status" value="1"/>
</dbReference>
<dbReference type="InterPro" id="IPR012677">
    <property type="entry name" value="Nucleotide-bd_a/b_plait_sf"/>
</dbReference>
<dbReference type="InterPro" id="IPR035979">
    <property type="entry name" value="RBD_domain_sf"/>
</dbReference>
<dbReference type="InterPro" id="IPR048289">
    <property type="entry name" value="RRM2_NsCP33-like"/>
</dbReference>
<dbReference type="InterPro" id="IPR000504">
    <property type="entry name" value="RRM_dom"/>
</dbReference>
<dbReference type="InterPro" id="IPR052462">
    <property type="entry name" value="SLIRP/GR-RBP-like"/>
</dbReference>
<dbReference type="PANTHER" id="PTHR48027">
    <property type="entry name" value="HETEROGENEOUS NUCLEAR RIBONUCLEOPROTEIN 87F-RELATED"/>
    <property type="match status" value="1"/>
</dbReference>
<dbReference type="Pfam" id="PF00076">
    <property type="entry name" value="RRM_1"/>
    <property type="match status" value="1"/>
</dbReference>
<dbReference type="SMART" id="SM00360">
    <property type="entry name" value="RRM"/>
    <property type="match status" value="1"/>
</dbReference>
<dbReference type="SUPFAM" id="SSF54928">
    <property type="entry name" value="RNA-binding domain, RBD"/>
    <property type="match status" value="1"/>
</dbReference>
<dbReference type="PROSITE" id="PS50102">
    <property type="entry name" value="RRM"/>
    <property type="match status" value="1"/>
</dbReference>